<feature type="chain" id="PRO_1000063131" description="Imidazole glycerol phosphate synthase subunit HisF">
    <location>
        <begin position="1"/>
        <end position="255"/>
    </location>
</feature>
<feature type="active site" evidence="1">
    <location>
        <position position="11"/>
    </location>
</feature>
<feature type="active site" evidence="1">
    <location>
        <position position="130"/>
    </location>
</feature>
<accession>Q13E40</accession>
<sequence length="255" mass="27358">MFKVRVIPCLDVKDGRVVKGVNFVDLRDAGDPVEAAIAYDAAGADELCFLDITATHENRGIMLDVVRRTAEACFMPVTVGGGVRTVDDIKTLLRSGADKVSINSAAVARREFVKEAAEKFGDQCIVVAIDAKRVPGRDRWEIFTHGGRKGTGIDAIEFAQEVVSLGAGEILLTSMDRDGTRSGFDIPLTRAIADSVQVPVIASGGVGDLDHLVDGIREGHATAVLAASIFHFGEYTIREAKDHMVRAGLPMRLDP</sequence>
<dbReference type="EC" id="4.3.2.10" evidence="1"/>
<dbReference type="EMBL" id="CP000283">
    <property type="protein sequence ID" value="ABE37649.1"/>
    <property type="molecule type" value="Genomic_DNA"/>
</dbReference>
<dbReference type="SMR" id="Q13E40"/>
<dbReference type="STRING" id="316057.RPD_0411"/>
<dbReference type="KEGG" id="rpd:RPD_0411"/>
<dbReference type="eggNOG" id="COG0107">
    <property type="taxonomic scope" value="Bacteria"/>
</dbReference>
<dbReference type="HOGENOM" id="CLU_048577_4_0_5"/>
<dbReference type="BioCyc" id="RPAL316057:RPD_RS02115-MONOMER"/>
<dbReference type="UniPathway" id="UPA00031">
    <property type="reaction ID" value="UER00010"/>
</dbReference>
<dbReference type="Proteomes" id="UP000001818">
    <property type="component" value="Chromosome"/>
</dbReference>
<dbReference type="GO" id="GO:0005737">
    <property type="term" value="C:cytoplasm"/>
    <property type="evidence" value="ECO:0007669"/>
    <property type="project" value="UniProtKB-SubCell"/>
</dbReference>
<dbReference type="GO" id="GO:0000107">
    <property type="term" value="F:imidazoleglycerol-phosphate synthase activity"/>
    <property type="evidence" value="ECO:0007669"/>
    <property type="project" value="UniProtKB-UniRule"/>
</dbReference>
<dbReference type="GO" id="GO:0016829">
    <property type="term" value="F:lyase activity"/>
    <property type="evidence" value="ECO:0007669"/>
    <property type="project" value="UniProtKB-KW"/>
</dbReference>
<dbReference type="GO" id="GO:0000105">
    <property type="term" value="P:L-histidine biosynthetic process"/>
    <property type="evidence" value="ECO:0007669"/>
    <property type="project" value="UniProtKB-UniRule"/>
</dbReference>
<dbReference type="CDD" id="cd04731">
    <property type="entry name" value="HisF"/>
    <property type="match status" value="1"/>
</dbReference>
<dbReference type="FunFam" id="3.20.20.70:FF:000006">
    <property type="entry name" value="Imidazole glycerol phosphate synthase subunit HisF"/>
    <property type="match status" value="1"/>
</dbReference>
<dbReference type="Gene3D" id="3.20.20.70">
    <property type="entry name" value="Aldolase class I"/>
    <property type="match status" value="1"/>
</dbReference>
<dbReference type="HAMAP" id="MF_01013">
    <property type="entry name" value="HisF"/>
    <property type="match status" value="1"/>
</dbReference>
<dbReference type="InterPro" id="IPR013785">
    <property type="entry name" value="Aldolase_TIM"/>
</dbReference>
<dbReference type="InterPro" id="IPR006062">
    <property type="entry name" value="His_biosynth"/>
</dbReference>
<dbReference type="InterPro" id="IPR004651">
    <property type="entry name" value="HisF"/>
</dbReference>
<dbReference type="InterPro" id="IPR050064">
    <property type="entry name" value="IGPS_HisA/HisF"/>
</dbReference>
<dbReference type="InterPro" id="IPR011060">
    <property type="entry name" value="RibuloseP-bd_barrel"/>
</dbReference>
<dbReference type="NCBIfam" id="TIGR00735">
    <property type="entry name" value="hisF"/>
    <property type="match status" value="1"/>
</dbReference>
<dbReference type="PANTHER" id="PTHR21235:SF2">
    <property type="entry name" value="IMIDAZOLE GLYCEROL PHOSPHATE SYNTHASE HISHF"/>
    <property type="match status" value="1"/>
</dbReference>
<dbReference type="PANTHER" id="PTHR21235">
    <property type="entry name" value="IMIDAZOLE GLYCEROL PHOSPHATE SYNTHASE SUBUNIT HISF/H IGP SYNTHASE SUBUNIT HISF/H"/>
    <property type="match status" value="1"/>
</dbReference>
<dbReference type="Pfam" id="PF00977">
    <property type="entry name" value="His_biosynth"/>
    <property type="match status" value="1"/>
</dbReference>
<dbReference type="SUPFAM" id="SSF51366">
    <property type="entry name" value="Ribulose-phoshate binding barrel"/>
    <property type="match status" value="1"/>
</dbReference>
<organism>
    <name type="scientific">Rhodopseudomonas palustris (strain BisB5)</name>
    <dbReference type="NCBI Taxonomy" id="316057"/>
    <lineage>
        <taxon>Bacteria</taxon>
        <taxon>Pseudomonadati</taxon>
        <taxon>Pseudomonadota</taxon>
        <taxon>Alphaproteobacteria</taxon>
        <taxon>Hyphomicrobiales</taxon>
        <taxon>Nitrobacteraceae</taxon>
        <taxon>Rhodopseudomonas</taxon>
    </lineage>
</organism>
<gene>
    <name evidence="1" type="primary">hisF</name>
    <name type="ordered locus">RPD_0411</name>
</gene>
<evidence type="ECO:0000255" key="1">
    <source>
        <dbReference type="HAMAP-Rule" id="MF_01013"/>
    </source>
</evidence>
<comment type="function">
    <text evidence="1">IGPS catalyzes the conversion of PRFAR and glutamine to IGP, AICAR and glutamate. The HisF subunit catalyzes the cyclization activity that produces IGP and AICAR from PRFAR using the ammonia provided by the HisH subunit.</text>
</comment>
<comment type="catalytic activity">
    <reaction evidence="1">
        <text>5-[(5-phospho-1-deoxy-D-ribulos-1-ylimino)methylamino]-1-(5-phospho-beta-D-ribosyl)imidazole-4-carboxamide + L-glutamine = D-erythro-1-(imidazol-4-yl)glycerol 3-phosphate + 5-amino-1-(5-phospho-beta-D-ribosyl)imidazole-4-carboxamide + L-glutamate + H(+)</text>
        <dbReference type="Rhea" id="RHEA:24793"/>
        <dbReference type="ChEBI" id="CHEBI:15378"/>
        <dbReference type="ChEBI" id="CHEBI:29985"/>
        <dbReference type="ChEBI" id="CHEBI:58278"/>
        <dbReference type="ChEBI" id="CHEBI:58359"/>
        <dbReference type="ChEBI" id="CHEBI:58475"/>
        <dbReference type="ChEBI" id="CHEBI:58525"/>
        <dbReference type="EC" id="4.3.2.10"/>
    </reaction>
</comment>
<comment type="pathway">
    <text evidence="1">Amino-acid biosynthesis; L-histidine biosynthesis; L-histidine from 5-phospho-alpha-D-ribose 1-diphosphate: step 5/9.</text>
</comment>
<comment type="subunit">
    <text evidence="1">Heterodimer of HisH and HisF.</text>
</comment>
<comment type="subcellular location">
    <subcellularLocation>
        <location evidence="1">Cytoplasm</location>
    </subcellularLocation>
</comment>
<comment type="similarity">
    <text evidence="1">Belongs to the HisA/HisF family.</text>
</comment>
<keyword id="KW-0028">Amino-acid biosynthesis</keyword>
<keyword id="KW-0963">Cytoplasm</keyword>
<keyword id="KW-0368">Histidine biosynthesis</keyword>
<keyword id="KW-0456">Lyase</keyword>
<proteinExistence type="inferred from homology"/>
<name>HIS6_RHOPS</name>
<protein>
    <recommendedName>
        <fullName evidence="1">Imidazole glycerol phosphate synthase subunit HisF</fullName>
        <ecNumber evidence="1">4.3.2.10</ecNumber>
    </recommendedName>
    <alternativeName>
        <fullName evidence="1">IGP synthase cyclase subunit</fullName>
    </alternativeName>
    <alternativeName>
        <fullName evidence="1">IGP synthase subunit HisF</fullName>
    </alternativeName>
    <alternativeName>
        <fullName evidence="1">ImGP synthase subunit HisF</fullName>
        <shortName evidence="1">IGPS subunit HisF</shortName>
    </alternativeName>
</protein>
<reference key="1">
    <citation type="submission" date="2006-03" db="EMBL/GenBank/DDBJ databases">
        <title>Complete sequence of Rhodopseudomonas palustris BisB5.</title>
        <authorList>
            <consortium name="US DOE Joint Genome Institute"/>
            <person name="Copeland A."/>
            <person name="Lucas S."/>
            <person name="Lapidus A."/>
            <person name="Barry K."/>
            <person name="Detter J.C."/>
            <person name="Glavina del Rio T."/>
            <person name="Hammon N."/>
            <person name="Israni S."/>
            <person name="Dalin E."/>
            <person name="Tice H."/>
            <person name="Pitluck S."/>
            <person name="Chain P."/>
            <person name="Malfatti S."/>
            <person name="Shin M."/>
            <person name="Vergez L."/>
            <person name="Schmutz J."/>
            <person name="Larimer F."/>
            <person name="Land M."/>
            <person name="Hauser L."/>
            <person name="Pelletier D.A."/>
            <person name="Kyrpides N."/>
            <person name="Lykidis A."/>
            <person name="Oda Y."/>
            <person name="Harwood C.S."/>
            <person name="Richardson P."/>
        </authorList>
    </citation>
    <scope>NUCLEOTIDE SEQUENCE [LARGE SCALE GENOMIC DNA]</scope>
    <source>
        <strain>BisB5</strain>
    </source>
</reference>